<feature type="chain" id="PRO_0000329043" description="Exocyst complex component 6">
    <location>
        <begin position="1"/>
        <end position="1025"/>
    </location>
</feature>
<feature type="region of interest" description="Disordered" evidence="5">
    <location>
        <begin position="1"/>
        <end position="122"/>
    </location>
</feature>
<feature type="region of interest" description="Disordered" evidence="5">
    <location>
        <begin position="135"/>
        <end position="154"/>
    </location>
</feature>
<feature type="region of interest" description="Disordered" evidence="5">
    <location>
        <begin position="666"/>
        <end position="691"/>
    </location>
</feature>
<feature type="coiled-coil region" evidence="4">
    <location>
        <begin position="19"/>
        <end position="68"/>
    </location>
</feature>
<feature type="compositionally biased region" description="Basic and acidic residues" evidence="5">
    <location>
        <begin position="1"/>
        <end position="10"/>
    </location>
</feature>
<feature type="compositionally biased region" description="Basic and acidic residues" evidence="5">
    <location>
        <begin position="22"/>
        <end position="52"/>
    </location>
</feature>
<feature type="compositionally biased region" description="Low complexity" evidence="5">
    <location>
        <begin position="71"/>
        <end position="93"/>
    </location>
</feature>
<feature type="compositionally biased region" description="Polar residues" evidence="5">
    <location>
        <begin position="104"/>
        <end position="118"/>
    </location>
</feature>
<feature type="compositionally biased region" description="Low complexity" evidence="5">
    <location>
        <begin position="135"/>
        <end position="147"/>
    </location>
</feature>
<feature type="compositionally biased region" description="Low complexity" evidence="5">
    <location>
        <begin position="666"/>
        <end position="677"/>
    </location>
</feature>
<feature type="compositionally biased region" description="Acidic residues" evidence="5">
    <location>
        <begin position="678"/>
        <end position="691"/>
    </location>
</feature>
<comment type="function">
    <text evidence="1">Component of the exocyst complex involved in the docking of exocytic vesicles with fusion sites on the plasma membrane.</text>
</comment>
<comment type="subunit">
    <text evidence="1">The exocyst complex is composed of sec3/exoc1, sec5/exoc2, sec6/exoc3, sec8/exoc4, sec10/exoc5, sec15/exoc6, exo70/exoc7 and exo84/exoc8.</text>
</comment>
<comment type="subcellular location">
    <subcellularLocation>
        <location evidence="2">Cytoplasm</location>
    </subcellularLocation>
    <subcellularLocation>
        <location evidence="2">Cytoplasm</location>
        <location evidence="2">Perinuclear region</location>
    </subcellularLocation>
    <subcellularLocation>
        <location evidence="3">Midbody</location>
        <location evidence="3">Midbody ring</location>
    </subcellularLocation>
</comment>
<comment type="similarity">
    <text evidence="6">Belongs to the SEC15 family.</text>
</comment>
<reference key="1">
    <citation type="journal article" date="2005" name="Nature">
        <title>The genome of the social amoeba Dictyostelium discoideum.</title>
        <authorList>
            <person name="Eichinger L."/>
            <person name="Pachebat J.A."/>
            <person name="Gloeckner G."/>
            <person name="Rajandream M.A."/>
            <person name="Sucgang R."/>
            <person name="Berriman M."/>
            <person name="Song J."/>
            <person name="Olsen R."/>
            <person name="Szafranski K."/>
            <person name="Xu Q."/>
            <person name="Tunggal B."/>
            <person name="Kummerfeld S."/>
            <person name="Madera M."/>
            <person name="Konfortov B.A."/>
            <person name="Rivero F."/>
            <person name="Bankier A.T."/>
            <person name="Lehmann R."/>
            <person name="Hamlin N."/>
            <person name="Davies R."/>
            <person name="Gaudet P."/>
            <person name="Fey P."/>
            <person name="Pilcher K."/>
            <person name="Chen G."/>
            <person name="Saunders D."/>
            <person name="Sodergren E.J."/>
            <person name="Davis P."/>
            <person name="Kerhornou A."/>
            <person name="Nie X."/>
            <person name="Hall N."/>
            <person name="Anjard C."/>
            <person name="Hemphill L."/>
            <person name="Bason N."/>
            <person name="Farbrother P."/>
            <person name="Desany B."/>
            <person name="Just E."/>
            <person name="Morio T."/>
            <person name="Rost R."/>
            <person name="Churcher C.M."/>
            <person name="Cooper J."/>
            <person name="Haydock S."/>
            <person name="van Driessche N."/>
            <person name="Cronin A."/>
            <person name="Goodhead I."/>
            <person name="Muzny D.M."/>
            <person name="Mourier T."/>
            <person name="Pain A."/>
            <person name="Lu M."/>
            <person name="Harper D."/>
            <person name="Lindsay R."/>
            <person name="Hauser H."/>
            <person name="James K.D."/>
            <person name="Quiles M."/>
            <person name="Madan Babu M."/>
            <person name="Saito T."/>
            <person name="Buchrieser C."/>
            <person name="Wardroper A."/>
            <person name="Felder M."/>
            <person name="Thangavelu M."/>
            <person name="Johnson D."/>
            <person name="Knights A."/>
            <person name="Loulseged H."/>
            <person name="Mungall K.L."/>
            <person name="Oliver K."/>
            <person name="Price C."/>
            <person name="Quail M.A."/>
            <person name="Urushihara H."/>
            <person name="Hernandez J."/>
            <person name="Rabbinowitsch E."/>
            <person name="Steffen D."/>
            <person name="Sanders M."/>
            <person name="Ma J."/>
            <person name="Kohara Y."/>
            <person name="Sharp S."/>
            <person name="Simmonds M.N."/>
            <person name="Spiegler S."/>
            <person name="Tivey A."/>
            <person name="Sugano S."/>
            <person name="White B."/>
            <person name="Walker D."/>
            <person name="Woodward J.R."/>
            <person name="Winckler T."/>
            <person name="Tanaka Y."/>
            <person name="Shaulsky G."/>
            <person name="Schleicher M."/>
            <person name="Weinstock G.M."/>
            <person name="Rosenthal A."/>
            <person name="Cox E.C."/>
            <person name="Chisholm R.L."/>
            <person name="Gibbs R.A."/>
            <person name="Loomis W.F."/>
            <person name="Platzer M."/>
            <person name="Kay R.R."/>
            <person name="Williams J.G."/>
            <person name="Dear P.H."/>
            <person name="Noegel A.A."/>
            <person name="Barrell B.G."/>
            <person name="Kuspa A."/>
        </authorList>
    </citation>
    <scope>NUCLEOTIDE SEQUENCE [LARGE SCALE GENOMIC DNA]</scope>
    <source>
        <strain>AX4</strain>
    </source>
</reference>
<accession>Q54B27</accession>
<organism>
    <name type="scientific">Dictyostelium discoideum</name>
    <name type="common">Social amoeba</name>
    <dbReference type="NCBI Taxonomy" id="44689"/>
    <lineage>
        <taxon>Eukaryota</taxon>
        <taxon>Amoebozoa</taxon>
        <taxon>Evosea</taxon>
        <taxon>Eumycetozoa</taxon>
        <taxon>Dictyostelia</taxon>
        <taxon>Dictyosteliales</taxon>
        <taxon>Dictyosteliaceae</taxon>
        <taxon>Dictyostelium</taxon>
    </lineage>
</organism>
<name>EXOC6_DICDI</name>
<evidence type="ECO:0000250" key="1"/>
<evidence type="ECO:0000250" key="2">
    <source>
        <dbReference type="UniProtKB" id="O54923"/>
    </source>
</evidence>
<evidence type="ECO:0000250" key="3">
    <source>
        <dbReference type="UniProtKB" id="Q8TAG9"/>
    </source>
</evidence>
<evidence type="ECO:0000255" key="4"/>
<evidence type="ECO:0000256" key="5">
    <source>
        <dbReference type="SAM" id="MobiDB-lite"/>
    </source>
</evidence>
<evidence type="ECO:0000305" key="6"/>
<protein>
    <recommendedName>
        <fullName>Exocyst complex component 6</fullName>
    </recommendedName>
    <alternativeName>
        <fullName>Exocyst complex component Sec15</fullName>
    </alternativeName>
</protein>
<sequence length="1025" mass="118207">MSNKKQKEEINTAGGSVILKTMVRDKDKEQKEEKREKKEKKRLEKKEAENVKKEKKKEKKELKKIGKAGRSGSITSDSSTHSGAQEFDSYGNDSNGGGGGLSASIDSNGLSSSGQPMQTRHLEKEVGEKQGIYSLSSQDRSSSLPHSSQDDQAKPLITESEIFSSESFLIAVSDTDHLGPAIKSVFENNKEKEVIKILNAYIAQKDLDIEKICGENHEGFINSVTAFLGLKGENLDLKQDVINLNYELQEIGRKYVTKAEELFAYKQIKDNIKRTKEVLNNCQYAILLGMKVDEYVQQKKYYQAIKNMDQLHNVYLKKLSDFQFARNMDYNIPVLKEKIKKLVKDEFNQWMVEIKEKSAVIGKLGMIQTSKKLLKEREINPLKIKTTFGENEQIWDKILDIPPIINSSSIGSLALYPTLNSPVTAPIYSPNSGKTPSSFGFNKQINEKDLKEDINQFSPFDESDIQFHPLYQCLFIHASIGQLEEFQAYYTLNRLLQFQLVIQPKESGQVWELFLQQILGYFMVESKVIDSTEPFLSKTTINDSWNSALVKVTSVLQELFTHCVDTQPLIAFKKFVLIFTNTMSFYSYHVQPLYYFLDTMKEKYCQFSIKEAVERFTIILERDSHCSLIIESLEEYKSLILANKLDILERQQLRQLQNSLNNNQFQFGDKNLNNNNNNDDDDDYFDEDENEDDKISKRLPKSFLFSKMVPQFYTLIKKFISEFYEFSDQLTENENFIIRSTDTLIKKINEVLYSYLTQSQAVPQVIQLVINLQHLISGCSFFKDYLNSLILGEDYQKNQSIVNETNKVILNSQNLLYTTKSHGEKLIIKLCEQKIEDLMSSAANIEWFPQNAIDDRPRDYIIDVCTFLEVTLPFISPLSQNLKEEFITKAFKNISESLFSLIYDDQLKKLNLQGVKSFDADLKYIETYVKEKANEKERTTTTSRNMVGYFVELRQLTNFLLSDNPEDFVDPKIKAKHYNLITNIPQLLNILNKYKEESKGFTTSKEIKDRNKKIADAIKKIKDSL</sequence>
<keyword id="KW-0175">Coiled coil</keyword>
<keyword id="KW-0963">Cytoplasm</keyword>
<keyword id="KW-0268">Exocytosis</keyword>
<keyword id="KW-0653">Protein transport</keyword>
<keyword id="KW-1185">Reference proteome</keyword>
<keyword id="KW-0813">Transport</keyword>
<proteinExistence type="inferred from homology"/>
<gene>
    <name type="primary">exoc6</name>
    <name type="synonym">sec15</name>
    <name type="ORF">DDB_G0293936</name>
</gene>
<dbReference type="EMBL" id="AAFI02000224">
    <property type="protein sequence ID" value="EAL60467.1"/>
    <property type="molecule type" value="Genomic_DNA"/>
</dbReference>
<dbReference type="RefSeq" id="XP_628889.1">
    <property type="nucleotide sequence ID" value="XM_628887.1"/>
</dbReference>
<dbReference type="SMR" id="Q54B27"/>
<dbReference type="FunCoup" id="Q54B27">
    <property type="interactions" value="577"/>
</dbReference>
<dbReference type="STRING" id="44689.Q54B27"/>
<dbReference type="PaxDb" id="44689-DDB0233959"/>
<dbReference type="EnsemblProtists" id="EAL60467">
    <property type="protein sequence ID" value="EAL60467"/>
    <property type="gene ID" value="DDB_G0293936"/>
</dbReference>
<dbReference type="GeneID" id="8629504"/>
<dbReference type="KEGG" id="ddi:DDB_G0293936"/>
<dbReference type="dictyBase" id="DDB_G0293936">
    <property type="gene designation" value="exoc6"/>
</dbReference>
<dbReference type="VEuPathDB" id="AmoebaDB:DDB_G0293936"/>
<dbReference type="eggNOG" id="KOG2176">
    <property type="taxonomic scope" value="Eukaryota"/>
</dbReference>
<dbReference type="HOGENOM" id="CLU_295343_0_0_1"/>
<dbReference type="InParanoid" id="Q54B27"/>
<dbReference type="OMA" id="FPFHSEQ"/>
<dbReference type="PhylomeDB" id="Q54B27"/>
<dbReference type="Reactome" id="R-DDI-264876">
    <property type="pathway name" value="Insulin processing"/>
</dbReference>
<dbReference type="PRO" id="PR:Q54B27"/>
<dbReference type="Proteomes" id="UP000002195">
    <property type="component" value="Chromosome 6"/>
</dbReference>
<dbReference type="GO" id="GO:0000145">
    <property type="term" value="C:exocyst"/>
    <property type="evidence" value="ECO:0000314"/>
    <property type="project" value="dictyBase"/>
</dbReference>
<dbReference type="GO" id="GO:0090543">
    <property type="term" value="C:Flemming body"/>
    <property type="evidence" value="ECO:0007669"/>
    <property type="project" value="UniProtKB-SubCell"/>
</dbReference>
<dbReference type="GO" id="GO:0048471">
    <property type="term" value="C:perinuclear region of cytoplasm"/>
    <property type="evidence" value="ECO:0007669"/>
    <property type="project" value="UniProtKB-SubCell"/>
</dbReference>
<dbReference type="GO" id="GO:0031267">
    <property type="term" value="F:small GTPase binding"/>
    <property type="evidence" value="ECO:0000353"/>
    <property type="project" value="dictyBase"/>
</dbReference>
<dbReference type="GO" id="GO:0070177">
    <property type="term" value="P:contractile vacuole discharge"/>
    <property type="evidence" value="ECO:0000314"/>
    <property type="project" value="dictyBase"/>
</dbReference>
<dbReference type="GO" id="GO:0006887">
    <property type="term" value="P:exocytosis"/>
    <property type="evidence" value="ECO:0000318"/>
    <property type="project" value="GO_Central"/>
</dbReference>
<dbReference type="GO" id="GO:0006893">
    <property type="term" value="P:Golgi to plasma membrane transport"/>
    <property type="evidence" value="ECO:0000318"/>
    <property type="project" value="GO_Central"/>
</dbReference>
<dbReference type="GO" id="GO:0006886">
    <property type="term" value="P:intracellular protein transport"/>
    <property type="evidence" value="ECO:0007669"/>
    <property type="project" value="InterPro"/>
</dbReference>
<dbReference type="GO" id="GO:0090522">
    <property type="term" value="P:vesicle tethering involved in exocytosis"/>
    <property type="evidence" value="ECO:0007669"/>
    <property type="project" value="InterPro"/>
</dbReference>
<dbReference type="FunFam" id="1.10.357.30:FF:000010">
    <property type="match status" value="1"/>
</dbReference>
<dbReference type="FunFam" id="1.20.58.670:FF:000002">
    <property type="entry name" value="Exocyst complex component"/>
    <property type="match status" value="1"/>
</dbReference>
<dbReference type="Gene3D" id="1.20.58.670">
    <property type="entry name" value="Dsl1p vesicle tethering complex, Tip20p subunit, domain D"/>
    <property type="match status" value="1"/>
</dbReference>
<dbReference type="Gene3D" id="1.10.357.30">
    <property type="entry name" value="Exocyst complex subunit Sec15 C-terminal domain, N-terminal subdomain"/>
    <property type="match status" value="1"/>
</dbReference>
<dbReference type="InterPro" id="IPR007225">
    <property type="entry name" value="EXOC6/Sec15"/>
</dbReference>
<dbReference type="InterPro" id="IPR046361">
    <property type="entry name" value="EXOC6/Sec15_C"/>
</dbReference>
<dbReference type="InterPro" id="IPR042045">
    <property type="entry name" value="EXOC6/Sec15_C_dom1"/>
</dbReference>
<dbReference type="InterPro" id="IPR048359">
    <property type="entry name" value="EXOC6_Sec15_N"/>
</dbReference>
<dbReference type="InterPro" id="IPR042044">
    <property type="entry name" value="EXOC6PINT-1/Sec15/Tip20_C_dom2"/>
</dbReference>
<dbReference type="PANTHER" id="PTHR12702:SF0">
    <property type="entry name" value="EXOCYST COMPLEX COMPONENT 6"/>
    <property type="match status" value="1"/>
</dbReference>
<dbReference type="PANTHER" id="PTHR12702">
    <property type="entry name" value="SEC15"/>
    <property type="match status" value="1"/>
</dbReference>
<dbReference type="Pfam" id="PF20651">
    <property type="entry name" value="EXOC6_Sec15_N"/>
    <property type="match status" value="1"/>
</dbReference>
<dbReference type="Pfam" id="PF04091">
    <property type="entry name" value="Sec15_C"/>
    <property type="match status" value="1"/>
</dbReference>